<accession>Q8WMP9</accession>
<accession>Q58CV9</accession>
<organism>
    <name type="scientific">Bos taurus</name>
    <name type="common">Bovine</name>
    <dbReference type="NCBI Taxonomy" id="9913"/>
    <lineage>
        <taxon>Eukaryota</taxon>
        <taxon>Metazoa</taxon>
        <taxon>Chordata</taxon>
        <taxon>Craniata</taxon>
        <taxon>Vertebrata</taxon>
        <taxon>Euteleostomi</taxon>
        <taxon>Mammalia</taxon>
        <taxon>Eutheria</taxon>
        <taxon>Laurasiatheria</taxon>
        <taxon>Artiodactyla</taxon>
        <taxon>Ruminantia</taxon>
        <taxon>Pecora</taxon>
        <taxon>Bovidae</taxon>
        <taxon>Bovinae</taxon>
        <taxon>Bos</taxon>
    </lineage>
</organism>
<evidence type="ECO:0000250" key="1">
    <source>
        <dbReference type="UniProtKB" id="Q675A5"/>
    </source>
</evidence>
<evidence type="ECO:0000250" key="2">
    <source>
        <dbReference type="UniProtKB" id="Q6XPZ3"/>
    </source>
</evidence>
<evidence type="ECO:0000250" key="3">
    <source>
        <dbReference type="UniProtKB" id="Q8NCC3"/>
    </source>
</evidence>
<evidence type="ECO:0000250" key="4">
    <source>
        <dbReference type="UniProtKB" id="Q8VEB4"/>
    </source>
</evidence>
<evidence type="ECO:0000255" key="5"/>
<evidence type="ECO:0000269" key="6">
    <source>
    </source>
</evidence>
<evidence type="ECO:0000269" key="7">
    <source>
    </source>
</evidence>
<evidence type="ECO:0000303" key="8">
    <source>
    </source>
</evidence>
<evidence type="ECO:0000305" key="9"/>
<evidence type="ECO:0000305" key="10">
    <source>
    </source>
</evidence>
<evidence type="ECO:0000305" key="11">
    <source>
    </source>
</evidence>
<evidence type="ECO:0000312" key="12">
    <source>
        <dbReference type="EMBL" id="AAX46685.1"/>
    </source>
</evidence>
<sequence>MGCLCLYRSTLLTGGLLFLLMLADPAFPAGSRPPVVLVPGDMGNQLEAKLDKPSVVHYVCSKRTDHYFTLWLNLELLLPVIIDCWIDNVRLIYNQTSHTTQFPEGVDVRVPGFGDTFSMEFLDPSKSSVGSYLHTMVESLVSWGYERGKDVRGAPYDWRRAPNENGPYFLALRKMIEEMYQLYGGPVVLVAHSMGNMYMLYFLQHQPQDWKDKYIRAFVALGPPWGGVPKTLRVLASGDNNRIPVIRSLKIRAQQRSAVSTTWLLPYSYTWSPQKVFVRTPKANYTLQDYRQFFQDIGFKDGWSMRQDTEGLVEATVPPGVRLHCLYGTGVPTPESFDYESFPDRDPKIHYGTGDGTVNLQSALHCHTWRGLQKQEVSLQALPGNEHIAMLANTTTLAYLKRVLLGP</sequence>
<name>PAG15_BOVIN</name>
<keyword id="KW-0012">Acyltransferase</keyword>
<keyword id="KW-0903">Direct protein sequencing</keyword>
<keyword id="KW-1015">Disulfide bond</keyword>
<keyword id="KW-0276">Fatty acid metabolism</keyword>
<keyword id="KW-0325">Glycoprotein</keyword>
<keyword id="KW-0378">Hydrolase</keyword>
<keyword id="KW-0443">Lipid metabolism</keyword>
<keyword id="KW-0458">Lysosome</keyword>
<keyword id="KW-0472">Membrane</keyword>
<keyword id="KW-0479">Metal-binding</keyword>
<keyword id="KW-1185">Reference proteome</keyword>
<keyword id="KW-0964">Secreted</keyword>
<keyword id="KW-0732">Signal</keyword>
<keyword id="KW-0808">Transferase</keyword>
<keyword id="KW-0862">Zinc</keyword>
<feature type="signal peptide" evidence="6">
    <location>
        <begin position="1"/>
        <end position="29"/>
    </location>
</feature>
<feature type="chain" id="PRO_0000413418" description="Lysosomal phospholipase A and acyltransferase" evidence="6">
    <location>
        <begin position="30"/>
        <end position="407"/>
    </location>
</feature>
<feature type="active site" description="Acyl-ester intermediate" evidence="3 5">
    <location>
        <position position="193"/>
    </location>
</feature>
<feature type="active site" description="Charge relay system" evidence="3">
    <location>
        <position position="355"/>
    </location>
</feature>
<feature type="active site" description="Charge relay system" evidence="3">
    <location>
        <position position="387"/>
    </location>
</feature>
<feature type="binding site" evidence="3">
    <location>
        <position position="41"/>
    </location>
    <ligand>
        <name>substrate</name>
    </ligand>
</feature>
<feature type="binding site" evidence="3">
    <location>
        <position position="193"/>
    </location>
    <ligand>
        <name>Zn(2+)</name>
        <dbReference type="ChEBI" id="CHEBI:29105"/>
    </ligand>
</feature>
<feature type="binding site" evidence="3">
    <location>
        <position position="194"/>
    </location>
    <ligand>
        <name>substrate</name>
    </ligand>
</feature>
<feature type="binding site" evidence="3">
    <location>
        <position position="387"/>
    </location>
    <ligand>
        <name>Zn(2+)</name>
        <dbReference type="ChEBI" id="CHEBI:29105"/>
    </ligand>
</feature>
<feature type="glycosylation site" description="N-linked (GlcNAc...) asparagine" evidence="5">
    <location>
        <position position="94"/>
    </location>
</feature>
<feature type="glycosylation site" description="N-linked (GlcNAc...) asparagine" evidence="5">
    <location>
        <position position="284"/>
    </location>
</feature>
<feature type="glycosylation site" description="N-linked (GlcNAc...) asparagine" evidence="5">
    <location>
        <position position="393"/>
    </location>
</feature>
<feature type="disulfide bond" evidence="3">
    <location>
        <begin position="60"/>
        <end position="84"/>
    </location>
</feature>
<feature type="sequence conflict" description="In Ref. 2; AAX46685." evidence="9" ref="2">
    <original>D</original>
    <variation>E</variation>
    <location>
        <position position="308"/>
    </location>
</feature>
<proteinExistence type="evidence at protein level"/>
<reference key="1">
    <citation type="journal article" date="2002" name="J. Biol. Chem.">
        <title>Cloning and characterization of a lysosomal phospholipase A2, 1-O-acylceramide synthase.</title>
        <authorList>
            <person name="Hiraoka M."/>
            <person name="Abe A."/>
            <person name="Shayman J.A."/>
        </authorList>
    </citation>
    <scope>NUCLEOTIDE SEQUENCE [MRNA]</scope>
    <scope>PROTEIN SEQUENCE OF 30-42</scope>
    <scope>GLYCOSYLATION</scope>
    <scope>FUNCTION</scope>
    <scope>CATALYTIC ACTIVITY</scope>
    <source>
        <tissue evidence="6">Kidney</tissue>
    </source>
</reference>
<reference key="2">
    <citation type="journal article" date="2005" name="BMC Genomics">
        <title>Characterization of 954 bovine full-CDS cDNA sequences.</title>
        <authorList>
            <person name="Harhay G.P."/>
            <person name="Sonstegard T.S."/>
            <person name="Keele J.W."/>
            <person name="Heaton M.P."/>
            <person name="Clawson M.L."/>
            <person name="Snelling W.M."/>
            <person name="Wiedmann R.T."/>
            <person name="Van Tassell C.P."/>
            <person name="Smith T.P.L."/>
        </authorList>
    </citation>
    <scope>NUCLEOTIDE SEQUENCE [LARGE SCALE MRNA]</scope>
</reference>
<reference key="3">
    <citation type="journal article" date="2009" name="Science">
        <title>The genome sequence of taurine cattle: a window to ruminant biology and evolution.</title>
        <authorList>
            <consortium name="The bovine genome sequencing and analysis consortium"/>
        </authorList>
    </citation>
    <scope>NUCLEOTIDE SEQUENCE [LARGE SCALE GENOMIC DNA]</scope>
    <source>
        <strain>Hereford</strain>
    </source>
</reference>
<reference key="4">
    <citation type="journal article" date="1998" name="J. Biol. Chem.">
        <title>Purification and characterization of 1-O-acylceramide synthase, a novel phospholipase A2 with transacylase activity.</title>
        <authorList>
            <person name="Abe A."/>
            <person name="Shayman J.A."/>
        </authorList>
    </citation>
    <scope>FUNCTION</scope>
    <scope>CATALYTIC ACTIVITY</scope>
    <scope>ACTIVITY REGULATION</scope>
    <scope>BIOPHYSICOCHEMICAL PROPERTIES</scope>
    <scope>TISSUE SPECIFICITY</scope>
    <scope>GLYCOSYLATION</scope>
</reference>
<protein>
    <recommendedName>
        <fullName>Lysosomal phospholipase A and acyltransferase</fullName>
        <ecNumber evidence="6 7">2.3.1.-</ecNumber>
        <ecNumber evidence="10 11">3.1.1.32</ecNumber>
        <ecNumber evidence="4">3.1.1.4</ecNumber>
    </recommendedName>
    <alternativeName>
        <fullName evidence="8">1-O-acylceramide synthase</fullName>
        <shortName evidence="8">ACS</shortName>
    </alternativeName>
    <alternativeName>
        <fullName evidence="8">LCAT-like lysophospholipase</fullName>
        <shortName evidence="8">LLPL</shortName>
        <ecNumber evidence="3">3.1.1.5</ecNumber>
    </alternativeName>
    <alternativeName>
        <fullName>Lysophospholipase 3</fullName>
    </alternativeName>
    <alternativeName>
        <fullName evidence="4">Lysosomal phospholipase A2</fullName>
        <shortName evidence="4">LPLA2</shortName>
    </alternativeName>
    <alternativeName>
        <fullName evidence="4">Phospholipase A2 group XV</fullName>
    </alternativeName>
</protein>
<dbReference type="EC" id="2.3.1.-" evidence="6 7"/>
<dbReference type="EC" id="3.1.1.32" evidence="10 11"/>
<dbReference type="EC" id="3.1.1.4" evidence="4"/>
<dbReference type="EC" id="3.1.1.5" evidence="3"/>
<dbReference type="EMBL" id="AY072914">
    <property type="protein sequence ID" value="AAL65270.1"/>
    <property type="molecule type" value="mRNA"/>
</dbReference>
<dbReference type="EMBL" id="BT021838">
    <property type="protein sequence ID" value="AAX46685.1"/>
    <property type="molecule type" value="mRNA"/>
</dbReference>
<dbReference type="EMBL" id="AAFC03012239">
    <property type="status" value="NOT_ANNOTATED_CDS"/>
    <property type="molecule type" value="Genomic_DNA"/>
</dbReference>
<dbReference type="EMBL" id="AAFC03024733">
    <property type="status" value="NOT_ANNOTATED_CDS"/>
    <property type="molecule type" value="Genomic_DNA"/>
</dbReference>
<dbReference type="RefSeq" id="NP_776985.2">
    <property type="nucleotide sequence ID" value="NM_174560.2"/>
</dbReference>
<dbReference type="SMR" id="Q8WMP9"/>
<dbReference type="FunCoup" id="Q8WMP9">
    <property type="interactions" value="956"/>
</dbReference>
<dbReference type="STRING" id="9913.ENSBTAP00000009888"/>
<dbReference type="ESTHER" id="bovin-LPLA2">
    <property type="family name" value="PC-sterol_acyltransferase"/>
</dbReference>
<dbReference type="GlyCosmos" id="Q8WMP9">
    <property type="glycosylation" value="3 sites, No reported glycans"/>
</dbReference>
<dbReference type="GlyGen" id="Q8WMP9">
    <property type="glycosylation" value="3 sites"/>
</dbReference>
<dbReference type="PaxDb" id="9913-ENSBTAP00000009888"/>
<dbReference type="Ensembl" id="ENSBTAT00000009888.4">
    <property type="protein sequence ID" value="ENSBTAP00000009888.2"/>
    <property type="gene ID" value="ENSBTAG00000007512.4"/>
</dbReference>
<dbReference type="GeneID" id="282271"/>
<dbReference type="KEGG" id="bta:282271"/>
<dbReference type="CTD" id="23659"/>
<dbReference type="VEuPathDB" id="HostDB:ENSBTAG00000007512"/>
<dbReference type="VGNC" id="VGNC:32956">
    <property type="gene designation" value="PLA2G15"/>
</dbReference>
<dbReference type="eggNOG" id="KOG2369">
    <property type="taxonomic scope" value="Eukaryota"/>
</dbReference>
<dbReference type="GeneTree" id="ENSGT00940000157499"/>
<dbReference type="HOGENOM" id="CLU_037070_1_1_1"/>
<dbReference type="InParanoid" id="Q8WMP9"/>
<dbReference type="OMA" id="QMTPPGV"/>
<dbReference type="OrthoDB" id="190846at2759"/>
<dbReference type="TreeFam" id="TF313258"/>
<dbReference type="Reactome" id="R-BTA-1483115">
    <property type="pathway name" value="Hydrolysis of LPC"/>
</dbReference>
<dbReference type="Proteomes" id="UP000009136">
    <property type="component" value="Chromosome 18"/>
</dbReference>
<dbReference type="Bgee" id="ENSBTAG00000007512">
    <property type="expression patterns" value="Expressed in conceptus and 103 other cell types or tissues"/>
</dbReference>
<dbReference type="GO" id="GO:0005615">
    <property type="term" value="C:extracellular space"/>
    <property type="evidence" value="ECO:0000250"/>
    <property type="project" value="UniProtKB"/>
</dbReference>
<dbReference type="GO" id="GO:0005764">
    <property type="term" value="C:lysosome"/>
    <property type="evidence" value="ECO:0000250"/>
    <property type="project" value="UniProtKB"/>
</dbReference>
<dbReference type="GO" id="GO:0016020">
    <property type="term" value="C:membrane"/>
    <property type="evidence" value="ECO:0007669"/>
    <property type="project" value="UniProtKB-SubCell"/>
</dbReference>
<dbReference type="GO" id="GO:0016411">
    <property type="term" value="F:acylglycerol O-acyltransferase activity"/>
    <property type="evidence" value="ECO:0000250"/>
    <property type="project" value="UniProtKB"/>
</dbReference>
<dbReference type="GO" id="GO:0047499">
    <property type="term" value="F:calcium-independent phospholipase A2 activity"/>
    <property type="evidence" value="ECO:0000314"/>
    <property type="project" value="UniProtKB"/>
</dbReference>
<dbReference type="GO" id="GO:0004622">
    <property type="term" value="F:lysophospholipase activity"/>
    <property type="evidence" value="ECO:0007669"/>
    <property type="project" value="UniProtKB-EC"/>
</dbReference>
<dbReference type="GO" id="GO:0008374">
    <property type="term" value="F:O-acyltransferase activity"/>
    <property type="evidence" value="ECO:0000314"/>
    <property type="project" value="UniProtKB"/>
</dbReference>
<dbReference type="GO" id="GO:0008970">
    <property type="term" value="F:phospholipase A1 activity"/>
    <property type="evidence" value="ECO:0000250"/>
    <property type="project" value="UniProtKB"/>
</dbReference>
<dbReference type="GO" id="GO:0008270">
    <property type="term" value="F:zinc ion binding"/>
    <property type="evidence" value="ECO:0000250"/>
    <property type="project" value="UniProtKB"/>
</dbReference>
<dbReference type="GO" id="GO:0006672">
    <property type="term" value="P:ceramide metabolic process"/>
    <property type="evidence" value="ECO:0000250"/>
    <property type="project" value="UniProtKB"/>
</dbReference>
<dbReference type="GO" id="GO:0006651">
    <property type="term" value="P:diacylglycerol biosynthetic process"/>
    <property type="evidence" value="ECO:0000250"/>
    <property type="project" value="UniProtKB"/>
</dbReference>
<dbReference type="GO" id="GO:0006631">
    <property type="term" value="P:fatty acid metabolic process"/>
    <property type="evidence" value="ECO:0007669"/>
    <property type="project" value="UniProtKB-KW"/>
</dbReference>
<dbReference type="GO" id="GO:0006650">
    <property type="term" value="P:glycerophospholipid metabolic process"/>
    <property type="evidence" value="ECO:0000250"/>
    <property type="project" value="UniProtKB"/>
</dbReference>
<dbReference type="GO" id="GO:0034638">
    <property type="term" value="P:phosphatidylcholine catabolic process"/>
    <property type="evidence" value="ECO:0000250"/>
    <property type="project" value="UniProtKB"/>
</dbReference>
<dbReference type="GO" id="GO:0046470">
    <property type="term" value="P:phosphatidylcholine metabolic process"/>
    <property type="evidence" value="ECO:0000250"/>
    <property type="project" value="UniProtKB"/>
</dbReference>
<dbReference type="GO" id="GO:0046338">
    <property type="term" value="P:phosphatidylethanolamine catabolic process"/>
    <property type="evidence" value="ECO:0000250"/>
    <property type="project" value="UniProtKB"/>
</dbReference>
<dbReference type="GO" id="GO:0046471">
    <property type="term" value="P:phosphatidylglycerol metabolic process"/>
    <property type="evidence" value="ECO:0000250"/>
    <property type="project" value="UniProtKB"/>
</dbReference>
<dbReference type="GO" id="GO:0006658">
    <property type="term" value="P:phosphatidylserine metabolic process"/>
    <property type="evidence" value="ECO:0000250"/>
    <property type="project" value="UniProtKB"/>
</dbReference>
<dbReference type="FunFam" id="3.40.50.1820:FF:000221">
    <property type="entry name" value="Group XV phospholipase A2"/>
    <property type="match status" value="1"/>
</dbReference>
<dbReference type="Gene3D" id="3.40.50.1820">
    <property type="entry name" value="alpha/beta hydrolase"/>
    <property type="match status" value="2"/>
</dbReference>
<dbReference type="InterPro" id="IPR029058">
    <property type="entry name" value="AB_hydrolase_fold"/>
</dbReference>
<dbReference type="InterPro" id="IPR003386">
    <property type="entry name" value="LACT/PDAT_acylTrfase"/>
</dbReference>
<dbReference type="PANTHER" id="PTHR11440">
    <property type="entry name" value="LECITHIN-CHOLESTEROL ACYLTRANSFERASE-RELATED"/>
    <property type="match status" value="1"/>
</dbReference>
<dbReference type="Pfam" id="PF02450">
    <property type="entry name" value="LCAT"/>
    <property type="match status" value="1"/>
</dbReference>
<dbReference type="SUPFAM" id="SSF53474">
    <property type="entry name" value="alpha/beta-Hydrolases"/>
    <property type="match status" value="1"/>
</dbReference>
<comment type="function">
    <text evidence="3 4 6 7">Has dual calcium-independent phospholipase and O-acyltransferase activities with a potential role in glycerophospholipid homeostasis and remodeling of acyl groups of lipophilic alcohols present in acidic cellular compartments (PubMed:11790796, PubMed:9525960). Catalyzes hydrolysis of the ester bond of the fatty acyl group attached at sn-1 or sn-2 position of phospholipids (phospholipase A1 or A2 activity) and transfer it to the hydroxyl group at the first carbon of lipophilic alcohols (O-acyltransferase activity) (PubMed:11790796, PubMed:9525960). Among preferred fatty acyl donors are phosphatidylcholines, phosphatidylethanolamines, phosphatidylglycerols and phosphatidylserines. Favors sn-2 over sn-1 deacylation of unsaturated fatty acyl groups of phosphatidylcholines, phosphatidylethanolamines, and phosphatidylglycerols (By similarity). Among preferred fatty acyl acceptors are natural lipophilic alcohols including short-chain ceramide N-acetyl-sphingosine (C2 ceramide), alkylacylglycerols, monoacylglycerols, and acylethanolamides such as anandamide and oleoylethanolamide. Selectively hydrolyzes the sn-1 fatty acyl group of truncated oxidized phospholipids and may play a role in detoxification of reactive oxidized phospholipids during oxidative stress (By similarity). Required for normal phospholipid degradation in alveolar macrophages with potential implications in the clearance of pulmonary surfactant, which is mainly composed of dipalmitoylphosphatidylcholine (1,2-dihexadecanoyl-sn-glycero-3-phosphocholine) (By similarity). Involved in the first step of bis(monoacylglycero)phosphate (BMP) de novo synthesis from phosphatidylglycerol (1,2-diacyl-sn-glycero-3-phospho-(1'-sn-glycerol), PG) (By similarity). BMP is an important player in cargo sorting and degradation, regulation of cellular cholesterol levels and intercellular communication. At neutral pH, hydrolyzes the sn-1 fatty acyl group of the lysophosphatidylcholines (By similarity).</text>
</comment>
<comment type="catalytic activity">
    <reaction evidence="4">
        <text>a 1,2-diacyl-sn-glycero-3-phosphocholine + H2O = a 2-acyl-sn-glycero-3-phosphocholine + a fatty acid + H(+)</text>
        <dbReference type="Rhea" id="RHEA:18689"/>
        <dbReference type="ChEBI" id="CHEBI:15377"/>
        <dbReference type="ChEBI" id="CHEBI:15378"/>
        <dbReference type="ChEBI" id="CHEBI:28868"/>
        <dbReference type="ChEBI" id="CHEBI:57643"/>
        <dbReference type="ChEBI" id="CHEBI:57875"/>
        <dbReference type="EC" id="3.1.1.32"/>
    </reaction>
    <physiologicalReaction direction="left-to-right" evidence="4">
        <dbReference type="Rhea" id="RHEA:18690"/>
    </physiologicalReaction>
</comment>
<comment type="catalytic activity">
    <reaction evidence="4">
        <text>1-hexadecanoyl-2-(9Z-octadecenoyl)-sn-glycero-3-phosphocholine + H2O = 2-(9Z-octadecenoyl)-sn-glycero-3-phosphocholine + hexadecanoate + H(+)</text>
        <dbReference type="Rhea" id="RHEA:38783"/>
        <dbReference type="ChEBI" id="CHEBI:7896"/>
        <dbReference type="ChEBI" id="CHEBI:15377"/>
        <dbReference type="ChEBI" id="CHEBI:15378"/>
        <dbReference type="ChEBI" id="CHEBI:73001"/>
        <dbReference type="ChEBI" id="CHEBI:76071"/>
    </reaction>
    <physiologicalReaction direction="left-to-right" evidence="4">
        <dbReference type="Rhea" id="RHEA:38784"/>
    </physiologicalReaction>
</comment>
<comment type="catalytic activity">
    <reaction evidence="4">
        <text>1,2-di-(9Z-octadecenoyl)-sn-glycero-3-phosphocholine + H2O = 2-(9Z-octadecenoyl)-sn-glycero-3-phosphocholine + (9Z)-octadecenoate + H(+)</text>
        <dbReference type="Rhea" id="RHEA:56448"/>
        <dbReference type="ChEBI" id="CHEBI:15377"/>
        <dbReference type="ChEBI" id="CHEBI:15378"/>
        <dbReference type="ChEBI" id="CHEBI:30823"/>
        <dbReference type="ChEBI" id="CHEBI:74669"/>
        <dbReference type="ChEBI" id="CHEBI:76071"/>
    </reaction>
    <physiologicalReaction direction="left-to-right" evidence="4">
        <dbReference type="Rhea" id="RHEA:56449"/>
    </physiologicalReaction>
</comment>
<comment type="catalytic activity">
    <reaction evidence="4">
        <text>1-hexadecanoyl-2-glutaroyl-sn-glycero-3-phosphocholine + H2O = 2-glutaroyl-sn-glycero-3-phosphocholine + hexadecanoate + H(+)</text>
        <dbReference type="Rhea" id="RHEA:62480"/>
        <dbReference type="ChEBI" id="CHEBI:7896"/>
        <dbReference type="ChEBI" id="CHEBI:15377"/>
        <dbReference type="ChEBI" id="CHEBI:15378"/>
        <dbReference type="ChEBI" id="CHEBI:77756"/>
        <dbReference type="ChEBI" id="CHEBI:145781"/>
    </reaction>
    <physiologicalReaction direction="left-to-right" evidence="4">
        <dbReference type="Rhea" id="RHEA:62481"/>
    </physiologicalReaction>
</comment>
<comment type="catalytic activity">
    <reaction evidence="4">
        <text>1-hexadecanoyl-2-nonadioyl-sn-glycero-3-phosphocholine + H2O = 2-nonadioyl-sn-glycero-3-phosphocholine + hexadecanoate + H(+)</text>
        <dbReference type="Rhea" id="RHEA:62464"/>
        <dbReference type="ChEBI" id="CHEBI:7896"/>
        <dbReference type="ChEBI" id="CHEBI:15377"/>
        <dbReference type="ChEBI" id="CHEBI:15378"/>
        <dbReference type="ChEBI" id="CHEBI:78207"/>
        <dbReference type="ChEBI" id="CHEBI:145780"/>
    </reaction>
    <physiologicalReaction direction="left-to-right" evidence="4">
        <dbReference type="Rhea" id="RHEA:62465"/>
    </physiologicalReaction>
</comment>
<comment type="catalytic activity">
    <reaction evidence="4">
        <text>1-hexadecanoyl-2-(5-oxopentanoyl)-sn-glycero-3-phosphocholine + H2O = 2-(5-oxopentanoyl)-sn-glycero-3-phosphocholine + hexadecanoate + H(+)</text>
        <dbReference type="Rhea" id="RHEA:62484"/>
        <dbReference type="ChEBI" id="CHEBI:7896"/>
        <dbReference type="ChEBI" id="CHEBI:15377"/>
        <dbReference type="ChEBI" id="CHEBI:15378"/>
        <dbReference type="ChEBI" id="CHEBI:77890"/>
        <dbReference type="ChEBI" id="CHEBI:145782"/>
    </reaction>
    <physiologicalReaction direction="left-to-right" evidence="4">
        <dbReference type="Rhea" id="RHEA:62485"/>
    </physiologicalReaction>
</comment>
<comment type="catalytic activity">
    <reaction evidence="4">
        <text>1-hexadecanoyl-2-(9-oxononanoyl)-sn-glycero-3-phosphocholine + H2O = 2-(9-oxononanoyl)-sn-glycero-3-phosphocholine + hexadecanoate + H(+)</text>
        <dbReference type="Rhea" id="RHEA:62488"/>
        <dbReference type="ChEBI" id="CHEBI:7896"/>
        <dbReference type="ChEBI" id="CHEBI:15377"/>
        <dbReference type="ChEBI" id="CHEBI:15378"/>
        <dbReference type="ChEBI" id="CHEBI:61042"/>
        <dbReference type="ChEBI" id="CHEBI:145783"/>
    </reaction>
    <physiologicalReaction direction="left-to-right" evidence="4">
        <dbReference type="Rhea" id="RHEA:62489"/>
    </physiologicalReaction>
</comment>
<comment type="catalytic activity">
    <reaction evidence="1">
        <text>1,2-dihexadecanoyl-sn-glycero-3-phosphocholine + H2O = 2-hexadecanoyl-sn-glycero-3-phosphocholine + hexadecanoate + H(+)</text>
        <dbReference type="Rhea" id="RHEA:40487"/>
        <dbReference type="ChEBI" id="CHEBI:7896"/>
        <dbReference type="ChEBI" id="CHEBI:15377"/>
        <dbReference type="ChEBI" id="CHEBI:15378"/>
        <dbReference type="ChEBI" id="CHEBI:72999"/>
        <dbReference type="ChEBI" id="CHEBI:76078"/>
    </reaction>
    <physiologicalReaction direction="left-to-right" evidence="1">
        <dbReference type="Rhea" id="RHEA:40488"/>
    </physiologicalReaction>
</comment>
<comment type="catalytic activity">
    <reaction evidence="4">
        <text>a 1,2-diacyl-sn-glycero-3-phosphocholine + H2O = a 1-acyl-sn-glycero-3-phosphocholine + a fatty acid + H(+)</text>
        <dbReference type="Rhea" id="RHEA:15801"/>
        <dbReference type="ChEBI" id="CHEBI:15377"/>
        <dbReference type="ChEBI" id="CHEBI:15378"/>
        <dbReference type="ChEBI" id="CHEBI:28868"/>
        <dbReference type="ChEBI" id="CHEBI:57643"/>
        <dbReference type="ChEBI" id="CHEBI:58168"/>
        <dbReference type="EC" id="3.1.1.4"/>
    </reaction>
    <physiologicalReaction direction="left-to-right" evidence="4">
        <dbReference type="Rhea" id="RHEA:15802"/>
    </physiologicalReaction>
</comment>
<comment type="catalytic activity">
    <reaction evidence="4">
        <text>1-hexadecanoyl-2-(9Z-octadecenoyl)-sn-glycero-3-phosphocholine + H2O = 1-hexadecanoyl-sn-glycero-3-phosphocholine + (9Z)-octadecenoate + H(+)</text>
        <dbReference type="Rhea" id="RHEA:38779"/>
        <dbReference type="ChEBI" id="CHEBI:15377"/>
        <dbReference type="ChEBI" id="CHEBI:15378"/>
        <dbReference type="ChEBI" id="CHEBI:30823"/>
        <dbReference type="ChEBI" id="CHEBI:72998"/>
        <dbReference type="ChEBI" id="CHEBI:73001"/>
    </reaction>
    <physiologicalReaction direction="left-to-right" evidence="4">
        <dbReference type="Rhea" id="RHEA:38780"/>
    </physiologicalReaction>
</comment>
<comment type="catalytic activity">
    <reaction evidence="4">
        <text>1,2-di-(9Z-octadecenoyl)-sn-glycero-3-phosphocholine + H2O = 1-(9Z-octadecenoyl)-sn-glycero-3-phosphocholine + (9Z)-octadecenoate + H(+)</text>
        <dbReference type="Rhea" id="RHEA:40923"/>
        <dbReference type="ChEBI" id="CHEBI:15377"/>
        <dbReference type="ChEBI" id="CHEBI:15378"/>
        <dbReference type="ChEBI" id="CHEBI:28610"/>
        <dbReference type="ChEBI" id="CHEBI:30823"/>
        <dbReference type="ChEBI" id="CHEBI:74669"/>
    </reaction>
    <physiologicalReaction direction="left-to-right" evidence="4">
        <dbReference type="Rhea" id="RHEA:40924"/>
    </physiologicalReaction>
</comment>
<comment type="catalytic activity">
    <reaction evidence="1">
        <text>1,2-dihexadecanoyl-sn-glycero-3-phosphocholine + H2O = 1-hexadecanoyl-sn-glycero-3-phosphocholine + hexadecanoate + H(+)</text>
        <dbReference type="Rhea" id="RHEA:41223"/>
        <dbReference type="ChEBI" id="CHEBI:7896"/>
        <dbReference type="ChEBI" id="CHEBI:15377"/>
        <dbReference type="ChEBI" id="CHEBI:15378"/>
        <dbReference type="ChEBI" id="CHEBI:72998"/>
        <dbReference type="ChEBI" id="CHEBI:72999"/>
    </reaction>
    <physiologicalReaction direction="left-to-right" evidence="1">
        <dbReference type="Rhea" id="RHEA:41224"/>
    </physiologicalReaction>
</comment>
<comment type="catalytic activity">
    <reaction evidence="3">
        <text>a 1-acyl-sn-glycero-3-phosphocholine + H2O = sn-glycerol 3-phosphocholine + a fatty acid + H(+)</text>
        <dbReference type="Rhea" id="RHEA:15177"/>
        <dbReference type="ChEBI" id="CHEBI:15377"/>
        <dbReference type="ChEBI" id="CHEBI:15378"/>
        <dbReference type="ChEBI" id="CHEBI:16870"/>
        <dbReference type="ChEBI" id="CHEBI:28868"/>
        <dbReference type="ChEBI" id="CHEBI:58168"/>
        <dbReference type="EC" id="3.1.1.5"/>
    </reaction>
    <physiologicalReaction direction="left-to-right" evidence="3">
        <dbReference type="Rhea" id="RHEA:15178"/>
    </physiologicalReaction>
</comment>
<comment type="catalytic activity">
    <reaction evidence="3">
        <text>1-hexadecanoyl-sn-glycero-3-phosphocholine + H2O = sn-glycerol 3-phosphocholine + hexadecanoate + H(+)</text>
        <dbReference type="Rhea" id="RHEA:40435"/>
        <dbReference type="ChEBI" id="CHEBI:7896"/>
        <dbReference type="ChEBI" id="CHEBI:15377"/>
        <dbReference type="ChEBI" id="CHEBI:15378"/>
        <dbReference type="ChEBI" id="CHEBI:16870"/>
        <dbReference type="ChEBI" id="CHEBI:72998"/>
    </reaction>
    <physiologicalReaction direction="left-to-right" evidence="3">
        <dbReference type="Rhea" id="RHEA:40436"/>
    </physiologicalReaction>
</comment>
<comment type="catalytic activity">
    <reaction evidence="4">
        <text>N-(acetyl)-sphing-4-enine + a 1,2-diacyl-sn-glycero-3-phosphoethanolamine = 1-O-acyl-N-(acetyl)-sphing-4-enine + a 2-acyl-sn-glycero-3-phosphoethanolamine</text>
        <dbReference type="Rhea" id="RHEA:44536"/>
        <dbReference type="ChEBI" id="CHEBI:46979"/>
        <dbReference type="ChEBI" id="CHEBI:64612"/>
        <dbReference type="ChEBI" id="CHEBI:65213"/>
        <dbReference type="ChEBI" id="CHEBI:84483"/>
    </reaction>
    <physiologicalReaction direction="left-to-right" evidence="4">
        <dbReference type="Rhea" id="RHEA:44537"/>
    </physiologicalReaction>
</comment>
<comment type="catalytic activity">
    <reaction evidence="4">
        <text>1-hexadecanoyl-2-(9Z-octadecenoyl)-sn-glycero-3-phosphoethanolamine + N-(acetyl)-sphing-4-enine = 2-(9Z-octadecenoyl)-sn-glycero-3-phosphoethanolamine + 1-hexadecanoyl-N-(acetyl)-sphing-4-enine</text>
        <dbReference type="Rhea" id="RHEA:38827"/>
        <dbReference type="ChEBI" id="CHEBI:46979"/>
        <dbReference type="ChEBI" id="CHEBI:73007"/>
        <dbReference type="ChEBI" id="CHEBI:76077"/>
        <dbReference type="ChEBI" id="CHEBI:76088"/>
    </reaction>
    <physiologicalReaction direction="left-to-right" evidence="4">
        <dbReference type="Rhea" id="RHEA:38828"/>
    </physiologicalReaction>
</comment>
<comment type="catalytic activity">
    <reaction evidence="4">
        <text>1-hexadecanoyl-2-(9Z,12Z-octadecadienoyl)-sn-glycero-3-phosphoethanolamine + N-(acetyl)-sphing-4-enine = 2-(9Z,12Z)-octadecadienoyl-sn-glycero-3-phosphoethanolamine + 1-hexadecanoyl-N-(acetyl)-sphing-4-enine</text>
        <dbReference type="Rhea" id="RHEA:38831"/>
        <dbReference type="ChEBI" id="CHEBI:46979"/>
        <dbReference type="ChEBI" id="CHEBI:73008"/>
        <dbReference type="ChEBI" id="CHEBI:76077"/>
        <dbReference type="ChEBI" id="CHEBI:76090"/>
    </reaction>
    <physiologicalReaction direction="left-to-right" evidence="4">
        <dbReference type="Rhea" id="RHEA:38832"/>
    </physiologicalReaction>
</comment>
<comment type="catalytic activity">
    <reaction evidence="4">
        <text>1-hexadecanoyl-2-(5Z,8Z,11Z,14Z-eicosatetraenoyl)-sn-glycero-3-phosphoethanolamine + N-(acetyl)-sphing-4-enine = 2-(5Z,8Z,11Z,14Z)-eicosatetraenoyl-sn-glycero-3-phosphoethanolamine + 1-hexadecanoyl-N-(acetyl)-sphing-4-enine</text>
        <dbReference type="Rhea" id="RHEA:38843"/>
        <dbReference type="ChEBI" id="CHEBI:46979"/>
        <dbReference type="ChEBI" id="CHEBI:73009"/>
        <dbReference type="ChEBI" id="CHEBI:76077"/>
        <dbReference type="ChEBI" id="CHEBI:76091"/>
    </reaction>
    <physiologicalReaction direction="left-to-right" evidence="4">
        <dbReference type="Rhea" id="RHEA:38844"/>
    </physiologicalReaction>
</comment>
<comment type="catalytic activity">
    <reaction evidence="7">
        <text>N-(acetyl)-sphing-4-enine + a 1,2-diacyl-sn-glycero-3-phosphoethanolamine = 1-O-acyl-N-(acetyl)-sphing-4-enine + a 1-acyl-sn-glycero-3-phosphoethanolamine</text>
        <dbReference type="Rhea" id="RHEA:44532"/>
        <dbReference type="ChEBI" id="CHEBI:46979"/>
        <dbReference type="ChEBI" id="CHEBI:64381"/>
        <dbReference type="ChEBI" id="CHEBI:64612"/>
        <dbReference type="ChEBI" id="CHEBI:84483"/>
    </reaction>
    <physiologicalReaction direction="left-to-right" evidence="11">
        <dbReference type="Rhea" id="RHEA:44533"/>
    </physiologicalReaction>
</comment>
<comment type="catalytic activity">
    <reaction evidence="4">
        <text>1-hexadecanoyl-2-(9Z-octadecenoyl)-sn-glycero-3-phosphoethanolamine + N-(acetyl)-sphing-4-enine = 1-(9Z-octadecenoyl)-N-(acetyl)-sphing-4-enine + 1-hexadecanoyl-sn-glycero-3-phosphoethanolamine</text>
        <dbReference type="Rhea" id="RHEA:38823"/>
        <dbReference type="ChEBI" id="CHEBI:46979"/>
        <dbReference type="ChEBI" id="CHEBI:73004"/>
        <dbReference type="ChEBI" id="CHEBI:73007"/>
        <dbReference type="ChEBI" id="CHEBI:76054"/>
    </reaction>
    <physiologicalReaction direction="left-to-right" evidence="4">
        <dbReference type="Rhea" id="RHEA:38824"/>
    </physiologicalReaction>
</comment>
<comment type="catalytic activity">
    <reaction evidence="4">
        <text>1-hexadecanoyl-2-(9Z,12Z-octadecadienoyl)-sn-glycero-3-phosphoethanolamine + N-(acetyl)-sphing-4-enine = 1-(9Z,12Z-octadecadienoyl)-N-acetylsphing-4-enine + 1-hexadecanoyl-sn-glycero-3-phosphoethanolamine</text>
        <dbReference type="Rhea" id="RHEA:38835"/>
        <dbReference type="ChEBI" id="CHEBI:46979"/>
        <dbReference type="ChEBI" id="CHEBI:73004"/>
        <dbReference type="ChEBI" id="CHEBI:73008"/>
        <dbReference type="ChEBI" id="CHEBI:76086"/>
    </reaction>
    <physiologicalReaction direction="left-to-right" evidence="4">
        <dbReference type="Rhea" id="RHEA:38836"/>
    </physiologicalReaction>
</comment>
<comment type="catalytic activity">
    <reaction evidence="4">
        <text>1-hexadecanoyl-2-(5Z,8Z,11Z,14Z-eicosatetraenoyl)-sn-glycero-3-phosphoethanolamine + N-(acetyl)-sphing-4-enine = 1-(5Z,8Z,11Z,14Z)-eicosatetraenoyl-N-(acetyl)-sphing-4-enine + 1-hexadecanoyl-sn-glycero-3-phosphoethanolamine</text>
        <dbReference type="Rhea" id="RHEA:38839"/>
        <dbReference type="ChEBI" id="CHEBI:46979"/>
        <dbReference type="ChEBI" id="CHEBI:73004"/>
        <dbReference type="ChEBI" id="CHEBI:73009"/>
        <dbReference type="ChEBI" id="CHEBI:76080"/>
    </reaction>
    <physiologicalReaction direction="left-to-right" evidence="4">
        <dbReference type="Rhea" id="RHEA:38840"/>
    </physiologicalReaction>
</comment>
<comment type="catalytic activity">
    <reaction evidence="10">
        <text>N-(acetyl)-sphing-4-enine + a 1,2-diacyl-sn-glycero-3-phosphocholine = 1-O-acyl-N-(acetyl)-sphing-4-enine + a 2-acyl-sn-glycero-3-phosphocholine</text>
        <dbReference type="Rhea" id="RHEA:44512"/>
        <dbReference type="ChEBI" id="CHEBI:46979"/>
        <dbReference type="ChEBI" id="CHEBI:57643"/>
        <dbReference type="ChEBI" id="CHEBI:57875"/>
        <dbReference type="ChEBI" id="CHEBI:84483"/>
    </reaction>
    <physiologicalReaction direction="left-to-right" evidence="10">
        <dbReference type="Rhea" id="RHEA:44513"/>
    </physiologicalReaction>
</comment>
<comment type="catalytic activity">
    <reaction evidence="4">
        <text>1-hexadecanoyl-2-(9Z-octadecenoyl)-sn-glycero-3-phosphocholine + N-(acetyl)-sphing-4-enine = 1-hexadecanoyl-N-(acetyl)-sphing-4-enine + 2-(9Z-octadecenoyl)-sn-glycero-3-phosphocholine</text>
        <dbReference type="Rhea" id="RHEA:38759"/>
        <dbReference type="ChEBI" id="CHEBI:46979"/>
        <dbReference type="ChEBI" id="CHEBI:73001"/>
        <dbReference type="ChEBI" id="CHEBI:76071"/>
        <dbReference type="ChEBI" id="CHEBI:76077"/>
    </reaction>
    <physiologicalReaction direction="left-to-right" evidence="4">
        <dbReference type="Rhea" id="RHEA:38760"/>
    </physiologicalReaction>
</comment>
<comment type="catalytic activity">
    <reaction evidence="4">
        <text>1-hexadecanoyl-2-(9Z,12Z-octadecadienoyl)-sn-glycero-3-phosphocholine + N-(acetyl)-sphing-4-enine = 2-(9Z,12Z-octadecadienoyl)-sn-glycero-3-phosphocholine + 1-hexadecanoyl-N-(acetyl)-sphing-4-enine</text>
        <dbReference type="Rhea" id="RHEA:38811"/>
        <dbReference type="ChEBI" id="CHEBI:46979"/>
        <dbReference type="ChEBI" id="CHEBI:73002"/>
        <dbReference type="ChEBI" id="CHEBI:76077"/>
        <dbReference type="ChEBI" id="CHEBI:76084"/>
    </reaction>
    <physiologicalReaction direction="left-to-right" evidence="4">
        <dbReference type="Rhea" id="RHEA:38812"/>
    </physiologicalReaction>
</comment>
<comment type="catalytic activity">
    <reaction evidence="4">
        <text>1-hexadecanoyl-2-(5Z,8Z,11Z,14Z-eicosatetraenoyl)-sn-glycero-3-phosphocholine + N-(acetyl)-sphing-4-enine = 1-hexadecanoyl-N-(acetyl)-sphing-4-enine + 2-(5Z,8Z,11Z,14Z)-eicosatetraenoyl-sn-glycero-3-phosphocholine</text>
        <dbReference type="Rhea" id="RHEA:38775"/>
        <dbReference type="ChEBI" id="CHEBI:46979"/>
        <dbReference type="ChEBI" id="CHEBI:73003"/>
        <dbReference type="ChEBI" id="CHEBI:76077"/>
        <dbReference type="ChEBI" id="CHEBI:76079"/>
    </reaction>
    <physiologicalReaction direction="left-to-right" evidence="4">
        <dbReference type="Rhea" id="RHEA:38776"/>
    </physiologicalReaction>
</comment>
<comment type="catalytic activity">
    <reaction evidence="4">
        <text>1-hexadecanoyl-2-(4Z,7Z,10Z,13Z,16Z,19Z-docosahexaenoyl)-sn-glycero-3-phosphocholine + N-(acetyl)-sphing-4-enine = 2-(4Z,7Z,10Z,13Z,16Z,19Z-docosahexaenoyl)-sn-glycero-3-phosphocholine + 1-hexadecanoyl-N-(acetyl)-sphing-4-enine</text>
        <dbReference type="Rhea" id="RHEA:38815"/>
        <dbReference type="ChEBI" id="CHEBI:46979"/>
        <dbReference type="ChEBI" id="CHEBI:74963"/>
        <dbReference type="ChEBI" id="CHEBI:76077"/>
        <dbReference type="ChEBI" id="CHEBI:76085"/>
    </reaction>
    <physiologicalReaction direction="left-to-right" evidence="4">
        <dbReference type="Rhea" id="RHEA:38816"/>
    </physiologicalReaction>
</comment>
<comment type="catalytic activity">
    <reaction evidence="4">
        <text>1-hexadecanoyl-2-nonadioyl-sn-glycero-3-phosphocholine + N-(acetyl)-sphing-4-enine = 2-nonadioyl-sn-glycero-3-phosphocholine + 1-hexadecanoyl-N-(acetyl)-sphing-4-enine</text>
        <dbReference type="Rhea" id="RHEA:62472"/>
        <dbReference type="ChEBI" id="CHEBI:46979"/>
        <dbReference type="ChEBI" id="CHEBI:76077"/>
        <dbReference type="ChEBI" id="CHEBI:78207"/>
        <dbReference type="ChEBI" id="CHEBI:145780"/>
    </reaction>
    <physiologicalReaction direction="left-to-right" evidence="4">
        <dbReference type="Rhea" id="RHEA:62473"/>
    </physiologicalReaction>
</comment>
<comment type="catalytic activity">
    <reaction evidence="4">
        <text>1-octadecanoyl-2-(9Z-octadecenoyl)-sn-glycero-3-phosphocholine + N-(acetyl)-sphing-4-enine = 1-octadecanoyl-N-(acetyl)-sphing-4-enine + 2-(9Z-octadecenoyl)-sn-glycero-3-phosphocholine</text>
        <dbReference type="Rhea" id="RHEA:38799"/>
        <dbReference type="ChEBI" id="CHEBI:46979"/>
        <dbReference type="ChEBI" id="CHEBI:75034"/>
        <dbReference type="ChEBI" id="CHEBI:76071"/>
        <dbReference type="ChEBI" id="CHEBI:76074"/>
    </reaction>
    <physiologicalReaction direction="left-to-right" evidence="4">
        <dbReference type="Rhea" id="RHEA:38800"/>
    </physiologicalReaction>
</comment>
<comment type="catalytic activity">
    <reaction evidence="4">
        <text>1-(9Z)-octadecenoyl-2-octadecanoyl-sn-glycero-3-phosphocholine + N-(acetyl)-sphing-4-enine = 2-octadecanoyl-sn-glycero-3-phosphocholine + 1-(9Z-octadecenoyl)-N-(acetyl)-sphing-4-enine</text>
        <dbReference type="Rhea" id="RHEA:38791"/>
        <dbReference type="ChEBI" id="CHEBI:46979"/>
        <dbReference type="ChEBI" id="CHEBI:76054"/>
        <dbReference type="ChEBI" id="CHEBI:76073"/>
        <dbReference type="ChEBI" id="CHEBI:76076"/>
    </reaction>
    <physiologicalReaction direction="left-to-right" evidence="4">
        <dbReference type="Rhea" id="RHEA:38792"/>
    </physiologicalReaction>
</comment>
<comment type="catalytic activity">
    <reaction evidence="3">
        <text>1-octadecanoyl-2-(5Z,8Z,11Z,14Z-eicosatetraenoyl)-sn-glycero-3-phosphocholine + N-(acetyl)-sphing-4-enine = 1-octadecanoyl-N-(acetyl)-sphing-4-enine + 2-(5Z,8Z,11Z,14Z)-eicosatetraenoyl-sn-glycero-3-phosphocholine</text>
        <dbReference type="Rhea" id="RHEA:57120"/>
        <dbReference type="ChEBI" id="CHEBI:46979"/>
        <dbReference type="ChEBI" id="CHEBI:74965"/>
        <dbReference type="ChEBI" id="CHEBI:76074"/>
        <dbReference type="ChEBI" id="CHEBI:76079"/>
    </reaction>
    <physiologicalReaction direction="left-to-right" evidence="3">
        <dbReference type="Rhea" id="RHEA:57121"/>
    </physiologicalReaction>
</comment>
<comment type="catalytic activity">
    <reaction evidence="4">
        <text>1-(9Z-octadecenoyl)-2-hexadecanoyl-sn-glycero-3-phosphocholine + N-(acetyl)-sphing-4-enine = 1-(9Z-octadecenoyl)-N-(acetyl)-sphing-4-enine + 2-hexadecanoyl-sn-glycero-3-phosphocholine</text>
        <dbReference type="Rhea" id="RHEA:38767"/>
        <dbReference type="ChEBI" id="CHEBI:46979"/>
        <dbReference type="ChEBI" id="CHEBI:74667"/>
        <dbReference type="ChEBI" id="CHEBI:76054"/>
        <dbReference type="ChEBI" id="CHEBI:76078"/>
    </reaction>
    <physiologicalReaction direction="left-to-right" evidence="4">
        <dbReference type="Rhea" id="RHEA:38768"/>
    </physiologicalReaction>
</comment>
<comment type="catalytic activity">
    <reaction evidence="10 11">
        <text>N-(acetyl)-sphing-4-enine + a 1,2-diacyl-sn-glycero-3-phosphocholine = 1-O-acyl-N-(acetyl)-sphing-4-enine + a 1-acyl-sn-glycero-3-phosphocholine</text>
        <dbReference type="Rhea" id="RHEA:44508"/>
        <dbReference type="ChEBI" id="CHEBI:46979"/>
        <dbReference type="ChEBI" id="CHEBI:57643"/>
        <dbReference type="ChEBI" id="CHEBI:58168"/>
        <dbReference type="ChEBI" id="CHEBI:84483"/>
    </reaction>
    <physiologicalReaction direction="left-to-right" evidence="10 11">
        <dbReference type="Rhea" id="RHEA:44509"/>
    </physiologicalReaction>
</comment>
<comment type="catalytic activity">
    <reaction evidence="4">
        <text>1-hexadecanoyl-2-(9Z-octadecenoyl)-sn-glycero-3-phosphocholine + N-(acetyl)-sphing-4-enine = 1-(9Z-octadecenoyl)-N-(acetyl)-sphing-4-enine + 1-hexadecanoyl-sn-glycero-3-phosphocholine</text>
        <dbReference type="Rhea" id="RHEA:38755"/>
        <dbReference type="ChEBI" id="CHEBI:46979"/>
        <dbReference type="ChEBI" id="CHEBI:72998"/>
        <dbReference type="ChEBI" id="CHEBI:73001"/>
        <dbReference type="ChEBI" id="CHEBI:76054"/>
    </reaction>
    <physiologicalReaction direction="left-to-right" evidence="4">
        <dbReference type="Rhea" id="RHEA:38756"/>
    </physiologicalReaction>
</comment>
<comment type="catalytic activity">
    <reaction evidence="4">
        <text>1-hexadecanoyl-2-(9Z,12Z-octadecadienoyl)-sn-glycero-3-phosphocholine + N-(acetyl)-sphing-4-enine = 1-(9Z,12Z-octadecadienoyl)-N-acetylsphing-4-enine + 1-hexadecanoyl-sn-glycero-3-phosphocholine</text>
        <dbReference type="Rhea" id="RHEA:38807"/>
        <dbReference type="ChEBI" id="CHEBI:46979"/>
        <dbReference type="ChEBI" id="CHEBI:72998"/>
        <dbReference type="ChEBI" id="CHEBI:73002"/>
        <dbReference type="ChEBI" id="CHEBI:76086"/>
    </reaction>
    <physiologicalReaction direction="left-to-right" evidence="4">
        <dbReference type="Rhea" id="RHEA:38808"/>
    </physiologicalReaction>
</comment>
<comment type="catalytic activity">
    <reaction evidence="4">
        <text>1-hexadecanoyl-2-(5Z,8Z,11Z,14Z-eicosatetraenoyl)-sn-glycero-3-phosphocholine + N-(acetyl)-sphing-4-enine = 1-(5Z,8Z,11Z,14Z)-eicosatetraenoyl-N-(acetyl)-sphing-4-enine + 1-hexadecanoyl-sn-glycero-3-phosphocholine</text>
        <dbReference type="Rhea" id="RHEA:38771"/>
        <dbReference type="ChEBI" id="CHEBI:46979"/>
        <dbReference type="ChEBI" id="CHEBI:72998"/>
        <dbReference type="ChEBI" id="CHEBI:73003"/>
        <dbReference type="ChEBI" id="CHEBI:76080"/>
    </reaction>
    <physiologicalReaction direction="left-to-right" evidence="4">
        <dbReference type="Rhea" id="RHEA:38772"/>
    </physiologicalReaction>
</comment>
<comment type="catalytic activity">
    <reaction evidence="4">
        <text>1-hexadecanoyl-2-(4Z,7Z,10Z,13Z,16Z,19Z-docosahexaenoyl)-sn-glycero-3-phosphocholine + N-(acetyl)-sphing-4-enine = 1-(4Z,7Z,10Z,13Z,16Z,19Z-docosahexaenoyl)-N-(acetyl)-sphing-4-enine + 1-hexadecanoyl-sn-glycero-3-phosphocholine</text>
        <dbReference type="Rhea" id="RHEA:38819"/>
        <dbReference type="ChEBI" id="CHEBI:46979"/>
        <dbReference type="ChEBI" id="CHEBI:72998"/>
        <dbReference type="ChEBI" id="CHEBI:74963"/>
        <dbReference type="ChEBI" id="CHEBI:76087"/>
    </reaction>
    <physiologicalReaction direction="left-to-right" evidence="4">
        <dbReference type="Rhea" id="RHEA:38820"/>
    </physiologicalReaction>
</comment>
<comment type="catalytic activity">
    <reaction evidence="4">
        <text>1-octadecanoyl-2-(9Z-octadecenoyl)-sn-glycero-3-phosphocholine + N-(acetyl)-sphing-4-enine = 1-(9Z-octadecenoyl)-N-(acetyl)-sphing-4-enine + 1-octadecanoyl-sn-glycero-3-phosphocholine</text>
        <dbReference type="Rhea" id="RHEA:38795"/>
        <dbReference type="ChEBI" id="CHEBI:46979"/>
        <dbReference type="ChEBI" id="CHEBI:73858"/>
        <dbReference type="ChEBI" id="CHEBI:75034"/>
        <dbReference type="ChEBI" id="CHEBI:76054"/>
    </reaction>
    <physiologicalReaction direction="left-to-right" evidence="4">
        <dbReference type="Rhea" id="RHEA:38796"/>
    </physiologicalReaction>
</comment>
<comment type="catalytic activity">
    <reaction evidence="3">
        <text>1-octadecanoyl-2-(9Z,12Z)-octadecadienoyl-sn-glycero-3-phosphocholine + N-(acetyl)-sphing-4-enine = 1-(9Z,12Z-octadecadienoyl)-N-acetylsphing-4-enine + 1-octadecanoyl-sn-glycero-3-phosphocholine</text>
        <dbReference type="Rhea" id="RHEA:57108"/>
        <dbReference type="ChEBI" id="CHEBI:46979"/>
        <dbReference type="ChEBI" id="CHEBI:73858"/>
        <dbReference type="ChEBI" id="CHEBI:76086"/>
        <dbReference type="ChEBI" id="CHEBI:84822"/>
    </reaction>
    <physiologicalReaction direction="left-to-right" evidence="3">
        <dbReference type="Rhea" id="RHEA:57109"/>
    </physiologicalReaction>
</comment>
<comment type="catalytic activity">
    <reaction evidence="4">
        <text>1-(9Z-octadecenoyl)-2-hexadecanoyl-sn-glycero-3-phosphocholine + N-(acetyl)-sphing-4-enine = 1-hexadecanoyl-N-(acetyl)-sphing-4-enine + 1-(9Z-octadecenoyl)-sn-glycero-3-phosphocholine</text>
        <dbReference type="Rhea" id="RHEA:38763"/>
        <dbReference type="ChEBI" id="CHEBI:28610"/>
        <dbReference type="ChEBI" id="CHEBI:46979"/>
        <dbReference type="ChEBI" id="CHEBI:74667"/>
        <dbReference type="ChEBI" id="CHEBI:76077"/>
    </reaction>
    <physiologicalReaction direction="left-to-right" evidence="4">
        <dbReference type="Rhea" id="RHEA:38764"/>
    </physiologicalReaction>
</comment>
<comment type="catalytic activity">
    <reaction evidence="4">
        <text>1-(9Z)-octadecenoyl-2-octadecanoyl-sn-glycero-3-phosphocholine + N-(acetyl)-sphing-4-enine = 1-octadecanoyl-N-(acetyl)-sphing-4-enine + 1-(9Z-octadecenoyl)-sn-glycero-3-phosphocholine</text>
        <dbReference type="Rhea" id="RHEA:38803"/>
        <dbReference type="ChEBI" id="CHEBI:28610"/>
        <dbReference type="ChEBI" id="CHEBI:46979"/>
        <dbReference type="ChEBI" id="CHEBI:76073"/>
        <dbReference type="ChEBI" id="CHEBI:76074"/>
    </reaction>
    <physiologicalReaction direction="left-to-right" evidence="4">
        <dbReference type="Rhea" id="RHEA:38804"/>
    </physiologicalReaction>
</comment>
<comment type="catalytic activity">
    <reaction evidence="10 11">
        <text>1,2-di-(9Z-octadecenoyl)-sn-glycero-3-phosphocholine + N-(acetyl)-sphing-4-enine = 1-(9Z-octadecenoyl)-N-(acetyl)-sphing-4-enine + 1-(9Z-octadecenoyl)-sn-glycero-3-phosphocholine</text>
        <dbReference type="Rhea" id="RHEA:38703"/>
        <dbReference type="ChEBI" id="CHEBI:28610"/>
        <dbReference type="ChEBI" id="CHEBI:46979"/>
        <dbReference type="ChEBI" id="CHEBI:74669"/>
        <dbReference type="ChEBI" id="CHEBI:76054"/>
    </reaction>
    <physiologicalReaction direction="left-to-right" evidence="10 11">
        <dbReference type="Rhea" id="RHEA:38704"/>
    </physiologicalReaction>
</comment>
<comment type="catalytic activity">
    <reaction evidence="3">
        <text>1-octadecanoyl-2-(5Z,8Z,11Z,14Z-eicosatetraenoyl)-sn-glycero-3-phosphocholine + N-(acetyl)-sphing-4-enine = 1-(5Z,8Z,11Z,14Z)-eicosatetraenoyl-N-(acetyl)-sphing-4-enine + 1-octadecanoyl-sn-glycero-3-phosphocholine</text>
        <dbReference type="Rhea" id="RHEA:57116"/>
        <dbReference type="ChEBI" id="CHEBI:46979"/>
        <dbReference type="ChEBI" id="CHEBI:73858"/>
        <dbReference type="ChEBI" id="CHEBI:74965"/>
        <dbReference type="ChEBI" id="CHEBI:76080"/>
    </reaction>
    <physiologicalReaction direction="left-to-right" evidence="3">
        <dbReference type="Rhea" id="RHEA:57117"/>
    </physiologicalReaction>
</comment>
<comment type="catalytic activity">
    <reaction evidence="3">
        <text>a 1,2-diacyl-sn-glycero-3-phospho-L-serine + N-(acetyl)-sphing-4-enine = a 2-acyl-sn-glycero-3-phospho-L-serine + 1-O-acyl-N-(acetyl)-sphing-4-enine</text>
        <dbReference type="Rhea" id="RHEA:78355"/>
        <dbReference type="ChEBI" id="CHEBI:46979"/>
        <dbReference type="ChEBI" id="CHEBI:57262"/>
        <dbReference type="ChEBI" id="CHEBI:65214"/>
        <dbReference type="ChEBI" id="CHEBI:84483"/>
    </reaction>
    <physiologicalReaction direction="left-to-right" evidence="3">
        <dbReference type="Rhea" id="RHEA:78356"/>
    </physiologicalReaction>
</comment>
<comment type="catalytic activity">
    <reaction evidence="3">
        <text>1-octadecanoyl-2-(9Z-octadecenoyl)-sn-glycero-3-phospho-L-serine + N-(acetyl)-sphing-4-enine = 2-(9Z-octadecenoyl)-sn-glycero-3-phospho-L-serine + 1-octadecanoyl-N-(acetyl)-sphing-4-enine</text>
        <dbReference type="Rhea" id="RHEA:57140"/>
        <dbReference type="ChEBI" id="CHEBI:46979"/>
        <dbReference type="ChEBI" id="CHEBI:76074"/>
        <dbReference type="ChEBI" id="CHEBI:77342"/>
        <dbReference type="ChEBI" id="CHEBI:78260"/>
    </reaction>
    <physiologicalReaction direction="left-to-right" evidence="3">
        <dbReference type="Rhea" id="RHEA:57141"/>
    </physiologicalReaction>
</comment>
<comment type="catalytic activity">
    <reaction evidence="3">
        <text>a 1,2-diacyl-sn-glycero-3-phospho-L-serine + N-(acetyl)-sphing-4-enine = 1-O-acyl-N-(acetyl)-sphing-4-enine + a 1-acyl-sn-glycero-3-phospho-L-serine</text>
        <dbReference type="Rhea" id="RHEA:78351"/>
        <dbReference type="ChEBI" id="CHEBI:46979"/>
        <dbReference type="ChEBI" id="CHEBI:57262"/>
        <dbReference type="ChEBI" id="CHEBI:64379"/>
        <dbReference type="ChEBI" id="CHEBI:84483"/>
    </reaction>
    <physiologicalReaction direction="left-to-right" evidence="3">
        <dbReference type="Rhea" id="RHEA:78352"/>
    </physiologicalReaction>
</comment>
<comment type="catalytic activity">
    <reaction evidence="3">
        <text>1-octadecanoyl-2-(9Z-octadecenoyl)-sn-glycero-3-phospho-L-serine + N-(acetyl)-sphing-4-enine = 1-octadecanoyl-sn-glycero-3-phosphoserine + 1-(9Z-octadecenoyl)-N-(acetyl)-sphing-4-enine</text>
        <dbReference type="Rhea" id="RHEA:57136"/>
        <dbReference type="ChEBI" id="CHEBI:46979"/>
        <dbReference type="ChEBI" id="CHEBI:76054"/>
        <dbReference type="ChEBI" id="CHEBI:78260"/>
        <dbReference type="ChEBI" id="CHEBI:84467"/>
    </reaction>
    <physiologicalReaction direction="left-to-right" evidence="3">
        <dbReference type="Rhea" id="RHEA:57137"/>
    </physiologicalReaction>
</comment>
<comment type="catalytic activity">
    <reaction evidence="3">
        <text>a 1,2-diacyl-sn-glycero-3-phospho-(1'-sn-glycerol) + N-(acetyl)-sphing-4-enine = 2-acyl-sn-glycero-3-phospho-(1'-sn-glycerol) + 1-O-acyl-N-(acetyl)-sphing-4-enine</text>
        <dbReference type="Rhea" id="RHEA:78359"/>
        <dbReference type="ChEBI" id="CHEBI:46979"/>
        <dbReference type="ChEBI" id="CHEBI:64716"/>
        <dbReference type="ChEBI" id="CHEBI:76528"/>
        <dbReference type="ChEBI" id="CHEBI:84483"/>
    </reaction>
    <physiologicalReaction direction="left-to-right" evidence="3">
        <dbReference type="Rhea" id="RHEA:78360"/>
    </physiologicalReaction>
</comment>
<comment type="catalytic activity">
    <reaction evidence="3">
        <text>1-octadecanoyl-2-(9Z-octadecenoyl)-sn-glycero-3-phospho-(1'-sn-glycerol) + N-(acetyl)-sphing-4-enine = 2-(9Z-octadecenoyl)-sn-glycero-3-phospho-(1'-sn-glycerol) + 1-octadecanoyl-N-(acetyl)-sphing-4-enine</text>
        <dbReference type="Rhea" id="RHEA:57144"/>
        <dbReference type="ChEBI" id="CHEBI:46979"/>
        <dbReference type="ChEBI" id="CHEBI:72845"/>
        <dbReference type="ChEBI" id="CHEBI:76074"/>
        <dbReference type="ChEBI" id="CHEBI:141490"/>
    </reaction>
    <physiologicalReaction direction="left-to-right" evidence="3">
        <dbReference type="Rhea" id="RHEA:57145"/>
    </physiologicalReaction>
</comment>
<comment type="catalytic activity">
    <reaction evidence="3">
        <text>a 1,2-diacyl-sn-glycero-3-phospho-(1'-sn-glycerol) + N-(acetyl)-sphing-4-enine = 1-O-acyl-N-(acetyl)-sphing-4-enine + 1-acyl-sn-glycero-3-phospho-(1'-sn-glycerol)</text>
        <dbReference type="Rhea" id="RHEA:78363"/>
        <dbReference type="ChEBI" id="CHEBI:46979"/>
        <dbReference type="ChEBI" id="CHEBI:64716"/>
        <dbReference type="ChEBI" id="CHEBI:64840"/>
        <dbReference type="ChEBI" id="CHEBI:84483"/>
    </reaction>
    <physiologicalReaction direction="left-to-right" evidence="3">
        <dbReference type="Rhea" id="RHEA:78364"/>
    </physiologicalReaction>
</comment>
<comment type="catalytic activity">
    <reaction evidence="3">
        <text>1-octadecanoyl-2-(9Z-octadecenoyl)-sn-glycero-3-phospho-(1'-sn-glycerol) + N-(acetyl)-sphing-4-enine = 1-octadecanoyl-sn-glycero-3-phospho-(1'-sn-glycerol) + 1-(9Z-octadecenoyl)-N-(acetyl)-sphing-4-enine</text>
        <dbReference type="Rhea" id="RHEA:57148"/>
        <dbReference type="ChEBI" id="CHEBI:46979"/>
        <dbReference type="ChEBI" id="CHEBI:72827"/>
        <dbReference type="ChEBI" id="CHEBI:72845"/>
        <dbReference type="ChEBI" id="CHEBI:76054"/>
    </reaction>
    <physiologicalReaction direction="left-to-right" evidence="3">
        <dbReference type="Rhea" id="RHEA:57149"/>
    </physiologicalReaction>
</comment>
<comment type="catalytic activity">
    <reaction evidence="4">
        <text>an N-acylethanolamine + a 1,2-diacyl-sn-glycero-3-phosphocholine = 2-(acylamino)ethyl fatty acid + a 2-acyl-sn-glycero-3-phosphocholine</text>
        <dbReference type="Rhea" id="RHEA:78055"/>
        <dbReference type="ChEBI" id="CHEBI:52640"/>
        <dbReference type="ChEBI" id="CHEBI:57643"/>
        <dbReference type="ChEBI" id="CHEBI:57875"/>
        <dbReference type="ChEBI" id="CHEBI:84481"/>
    </reaction>
    <physiologicalReaction direction="left-to-right" evidence="4">
        <dbReference type="Rhea" id="RHEA:78056"/>
    </physiologicalReaction>
</comment>
<comment type="catalytic activity">
    <reaction evidence="4">
        <text>an N-acylethanolamine + a 1,2-diacyl-sn-glycero-3-phosphocholine = 2-(acylamino)ethyl fatty acid + a 1-acyl-sn-glycero-3-phosphocholine</text>
        <dbReference type="Rhea" id="RHEA:78059"/>
        <dbReference type="ChEBI" id="CHEBI:52640"/>
        <dbReference type="ChEBI" id="CHEBI:57643"/>
        <dbReference type="ChEBI" id="CHEBI:58168"/>
        <dbReference type="ChEBI" id="CHEBI:84481"/>
    </reaction>
    <physiologicalReaction direction="left-to-right" evidence="4">
        <dbReference type="Rhea" id="RHEA:78060"/>
    </physiologicalReaction>
</comment>
<comment type="catalytic activity">
    <reaction evidence="4">
        <text>N-(5Z,8Z,11Z,14Z-eicosatetraenoyl)-ethanolamine + 1,2-di-(9Z-octadecenoyl)-sn-glycero-3-phosphocholine = 2-[(5Z,8Z,11Z,14Z)-eicosatetraenoylamino]ethyl (9Z)-octadecenoate + (9Z-octadecenoyl)-sn-glycero-3-phosphocholine</text>
        <dbReference type="Rhea" id="RHEA:38751"/>
        <dbReference type="ChEBI" id="CHEBI:2700"/>
        <dbReference type="ChEBI" id="CHEBI:74669"/>
        <dbReference type="ChEBI" id="CHEBI:76070"/>
        <dbReference type="ChEBI" id="CHEBI:76083"/>
    </reaction>
    <physiologicalReaction direction="left-to-right" evidence="4">
        <dbReference type="Rhea" id="RHEA:38752"/>
    </physiologicalReaction>
</comment>
<comment type="catalytic activity">
    <reaction evidence="4">
        <text>N-(9Z-octadecenoyl) ethanolamine + 1,2-di-(9Z-octadecenoyl)-sn-glycero-3-phosphocholine = 2-[(9Z)-octadecenoylamino]ethyl (9Z)-octadecenoate + (9Z-octadecenoyl)-sn-glycero-3-phosphocholine</text>
        <dbReference type="Rhea" id="RHEA:38747"/>
        <dbReference type="ChEBI" id="CHEBI:71466"/>
        <dbReference type="ChEBI" id="CHEBI:74669"/>
        <dbReference type="ChEBI" id="CHEBI:76068"/>
        <dbReference type="ChEBI" id="CHEBI:76083"/>
    </reaction>
    <physiologicalReaction direction="left-to-right" evidence="4">
        <dbReference type="Rhea" id="RHEA:38748"/>
    </physiologicalReaction>
</comment>
<comment type="catalytic activity">
    <reaction evidence="4">
        <text>a 3-acyl-sn-glycerol + a 1,2-diacyl-sn-glycero-3-phosphocholine = a 1,3-diacylglycerol + a 1-acyl-sn-glycero-3-phosphocholine</text>
        <dbReference type="Rhea" id="RHEA:78131"/>
        <dbReference type="ChEBI" id="CHEBI:47777"/>
        <dbReference type="ChEBI" id="CHEBI:57643"/>
        <dbReference type="ChEBI" id="CHEBI:58168"/>
        <dbReference type="ChEBI" id="CHEBI:64760"/>
    </reaction>
    <physiologicalReaction direction="left-to-right" evidence="4">
        <dbReference type="Rhea" id="RHEA:78132"/>
    </physiologicalReaction>
</comment>
<comment type="catalytic activity">
    <reaction evidence="4">
        <text>a 3-acyl-sn-glycerol + a 1,2-diacyl-sn-glycero-3-phosphocholine = a 1,3-diacylglycerol + a 2-acyl-sn-glycero-3-phosphocholine</text>
        <dbReference type="Rhea" id="RHEA:78135"/>
        <dbReference type="ChEBI" id="CHEBI:47777"/>
        <dbReference type="ChEBI" id="CHEBI:57643"/>
        <dbReference type="ChEBI" id="CHEBI:57875"/>
        <dbReference type="ChEBI" id="CHEBI:64760"/>
    </reaction>
    <physiologicalReaction direction="left-to-right" evidence="4">
        <dbReference type="Rhea" id="RHEA:78136"/>
    </physiologicalReaction>
</comment>
<comment type="catalytic activity">
    <reaction evidence="4">
        <text>3-(9Z-octadecenoyl)-sn-glycerol + 1,2-di-(9Z-octadecenoyl)-sn-glycero-3-phosphocholine = 1,3-di-(9Z-octadecenoyl)-glycerol + (9Z-octadecenoyl)-sn-glycero-3-phosphocholine</text>
        <dbReference type="Rhea" id="RHEA:38743"/>
        <dbReference type="ChEBI" id="CHEBI:74669"/>
        <dbReference type="ChEBI" id="CHEBI:75735"/>
        <dbReference type="ChEBI" id="CHEBI:75938"/>
        <dbReference type="ChEBI" id="CHEBI:76083"/>
    </reaction>
    <physiologicalReaction direction="left-to-right" evidence="4">
        <dbReference type="Rhea" id="RHEA:38744"/>
    </physiologicalReaction>
</comment>
<comment type="catalytic activity">
    <reaction evidence="4">
        <text>3-hexadecanoyl-sn-glycerol + 1,2-di-(9Z-octadecenoyl)-sn-glycero-3-phosphocholine = 1-(9Z)-octadecenoyl-3-hexadecanoyl-sn-glycerol + (9Z-octadecenoyl)-sn-glycero-3-phosphocholine</text>
        <dbReference type="Rhea" id="RHEA:38731"/>
        <dbReference type="ChEBI" id="CHEBI:64757"/>
        <dbReference type="ChEBI" id="CHEBI:74669"/>
        <dbReference type="ChEBI" id="CHEBI:75867"/>
        <dbReference type="ChEBI" id="CHEBI:76083"/>
    </reaction>
    <physiologicalReaction direction="left-to-right" evidence="4">
        <dbReference type="Rhea" id="RHEA:38732"/>
    </physiologicalReaction>
</comment>
<comment type="catalytic activity">
    <reaction evidence="4">
        <text>a 1-acyl-sn-glycerol + a 1,2-diacyl-sn-glycero-3-phosphocholine = a 1,3-diacylglycerol + a 2-acyl-sn-glycero-3-phosphocholine</text>
        <dbReference type="Rhea" id="RHEA:78139"/>
        <dbReference type="ChEBI" id="CHEBI:47777"/>
        <dbReference type="ChEBI" id="CHEBI:57643"/>
        <dbReference type="ChEBI" id="CHEBI:57875"/>
        <dbReference type="ChEBI" id="CHEBI:64683"/>
    </reaction>
    <physiologicalReaction direction="left-to-right" evidence="4">
        <dbReference type="Rhea" id="RHEA:78140"/>
    </physiologicalReaction>
</comment>
<comment type="catalytic activity">
    <reaction evidence="4">
        <text>a 1-acyl-sn-glycerol + a 1,2-diacyl-sn-glycero-3-phosphocholine = a 1,3-diacylglycerol + a 1-acyl-sn-glycero-3-phosphocholine</text>
        <dbReference type="Rhea" id="RHEA:78143"/>
        <dbReference type="ChEBI" id="CHEBI:47777"/>
        <dbReference type="ChEBI" id="CHEBI:57643"/>
        <dbReference type="ChEBI" id="CHEBI:58168"/>
        <dbReference type="ChEBI" id="CHEBI:64683"/>
    </reaction>
    <physiologicalReaction direction="left-to-right" evidence="4">
        <dbReference type="Rhea" id="RHEA:78144"/>
    </physiologicalReaction>
</comment>
<comment type="catalytic activity">
    <reaction evidence="4">
        <text>1-(9Z-octadecenoyl)-sn-glycerol + 1,2-di-(9Z-octadecenoyl)-sn-glycero-3-phosphocholine = 1,3-di-(9Z-octadecenoyl)-glycerol + (9Z-octadecenoyl)-sn-glycero-3-phosphocholine</text>
        <dbReference type="Rhea" id="RHEA:38739"/>
        <dbReference type="ChEBI" id="CHEBI:74669"/>
        <dbReference type="ChEBI" id="CHEBI:75735"/>
        <dbReference type="ChEBI" id="CHEBI:75757"/>
        <dbReference type="ChEBI" id="CHEBI:76083"/>
    </reaction>
    <physiologicalReaction direction="left-to-right" evidence="4">
        <dbReference type="Rhea" id="RHEA:38740"/>
    </physiologicalReaction>
</comment>
<comment type="catalytic activity">
    <reaction evidence="4">
        <text>1-hexadecanoyl-sn-glycerol + 1,2-di-(9Z-octadecenoyl)-sn-glycero-3-phosphocholine = 1-hexadecanoyl-3-(9Z)-octadecenoyl-sn-glycerol + (9Z-octadecenoyl)-sn-glycero-3-phosphocholine</text>
        <dbReference type="Rhea" id="RHEA:38727"/>
        <dbReference type="ChEBI" id="CHEBI:74669"/>
        <dbReference type="ChEBI" id="CHEBI:75542"/>
        <dbReference type="ChEBI" id="CHEBI:75868"/>
        <dbReference type="ChEBI" id="CHEBI:76083"/>
    </reaction>
    <physiologicalReaction direction="left-to-right" evidence="4">
        <dbReference type="Rhea" id="RHEA:38728"/>
    </physiologicalReaction>
</comment>
<comment type="catalytic activity">
    <reaction evidence="4">
        <text>a 2-acylglycerol + a 1,2-diacyl-sn-glycero-3-phosphocholine = a 1,2-diacylglycerol + a 2-acyl-sn-glycero-3-phosphocholine</text>
        <dbReference type="Rhea" id="RHEA:78443"/>
        <dbReference type="ChEBI" id="CHEBI:17389"/>
        <dbReference type="ChEBI" id="CHEBI:49172"/>
        <dbReference type="ChEBI" id="CHEBI:57643"/>
        <dbReference type="ChEBI" id="CHEBI:57875"/>
    </reaction>
    <physiologicalReaction direction="left-to-right" evidence="4">
        <dbReference type="Rhea" id="RHEA:78444"/>
    </physiologicalReaction>
</comment>
<comment type="catalytic activity">
    <reaction evidence="4">
        <text>a 2-acylglycerol + a 1,2-diacyl-sn-glycero-3-phosphocholine = a 1,2-diacylglycerol + a 1-acyl-sn-glycero-3-phosphocholine</text>
        <dbReference type="Rhea" id="RHEA:78439"/>
        <dbReference type="ChEBI" id="CHEBI:17389"/>
        <dbReference type="ChEBI" id="CHEBI:49172"/>
        <dbReference type="ChEBI" id="CHEBI:57643"/>
        <dbReference type="ChEBI" id="CHEBI:58168"/>
    </reaction>
    <physiologicalReaction direction="left-to-right" evidence="4">
        <dbReference type="Rhea" id="RHEA:78440"/>
    </physiologicalReaction>
</comment>
<comment type="catalytic activity">
    <reaction evidence="4">
        <text>2-hexadecanoylglycerol + 1,2-di-(9Z-octadecenoyl)-sn-glycero-3-phosphocholine = 1-(9Z)-octadecenoyl-2-hexadecanoylglycerol + (9Z-octadecenoyl)-sn-glycero-3-phosphocholine</text>
        <dbReference type="Rhea" id="RHEA:38735"/>
        <dbReference type="ChEBI" id="CHEBI:74669"/>
        <dbReference type="ChEBI" id="CHEBI:75455"/>
        <dbReference type="ChEBI" id="CHEBI:76065"/>
        <dbReference type="ChEBI" id="CHEBI:76083"/>
    </reaction>
    <physiologicalReaction direction="left-to-right" evidence="4">
        <dbReference type="Rhea" id="RHEA:38736"/>
    </physiologicalReaction>
</comment>
<comment type="catalytic activity">
    <reaction evidence="4">
        <text>1-O-alkylglycerol + a 1,2-diacyl-sn-glycero-3-phosphocholine = 1-O-alkyl-3-acylglycerol + a 1-acyl-sn-glycero-3-phosphocholine</text>
        <dbReference type="Rhea" id="RHEA:78039"/>
        <dbReference type="ChEBI" id="CHEBI:57643"/>
        <dbReference type="ChEBI" id="CHEBI:58168"/>
        <dbReference type="ChEBI" id="CHEBI:76225"/>
        <dbReference type="ChEBI" id="CHEBI:77997"/>
    </reaction>
    <physiologicalReaction direction="left-to-right" evidence="4">
        <dbReference type="Rhea" id="RHEA:78040"/>
    </physiologicalReaction>
</comment>
<comment type="catalytic activity">
    <reaction evidence="4">
        <text>1-O-alkylglycerol + a 1,2-diacyl-sn-glycero-3-phosphocholine = 1-O-alkyl-3-acylglycerol + a 2-acyl-sn-glycero-3-phosphocholine</text>
        <dbReference type="Rhea" id="RHEA:78043"/>
        <dbReference type="ChEBI" id="CHEBI:57643"/>
        <dbReference type="ChEBI" id="CHEBI:57875"/>
        <dbReference type="ChEBI" id="CHEBI:76225"/>
        <dbReference type="ChEBI" id="CHEBI:77997"/>
    </reaction>
    <physiologicalReaction direction="left-to-right" evidence="4">
        <dbReference type="Rhea" id="RHEA:78044"/>
    </physiologicalReaction>
</comment>
<comment type="catalytic activity">
    <reaction evidence="4">
        <text>1-O-hexadecylglycerol + 1,2-di-(9Z-octadecenoyl)-sn-glycero-3-phosphocholine = 1-O-hexadecyl-3-(9Z)-octadecenoylglycerol + (9Z-octadecenoyl)-sn-glycero-3-phosphocholine</text>
        <dbReference type="Rhea" id="RHEA:38711"/>
        <dbReference type="ChEBI" id="CHEBI:74669"/>
        <dbReference type="ChEBI" id="CHEBI:76061"/>
        <dbReference type="ChEBI" id="CHEBI:76062"/>
        <dbReference type="ChEBI" id="CHEBI:76083"/>
    </reaction>
    <physiologicalReaction direction="left-to-right" evidence="4">
        <dbReference type="Rhea" id="RHEA:38712"/>
    </physiologicalReaction>
</comment>
<comment type="catalytic activity">
    <reaction evidence="4">
        <text>1-O-alkyl-2-acyl-sn-glycerol + a 1,2-diacyl-sn-glycero-3-phosphocholine = 1-O-alkyl-2,3-diacyl-sn-glycerol + a 2-acyl-sn-glycero-3-phosphocholine</text>
        <dbReference type="Rhea" id="RHEA:78431"/>
        <dbReference type="ChEBI" id="CHEBI:52595"/>
        <dbReference type="ChEBI" id="CHEBI:57643"/>
        <dbReference type="ChEBI" id="CHEBI:57875"/>
        <dbReference type="ChEBI" id="CHEBI:76585"/>
    </reaction>
    <physiologicalReaction direction="left-to-right" evidence="4">
        <dbReference type="Rhea" id="RHEA:78432"/>
    </physiologicalReaction>
</comment>
<comment type="catalytic activity">
    <reaction evidence="4">
        <text>1-O-alkyl-2-acyl-sn-glycerol + a 1,2-diacyl-sn-glycero-3-phosphocholine = 1-O-alkyl-2,3-diacyl-sn-glycerol + a 1-acyl-sn-glycero-3-phosphocholine</text>
        <dbReference type="Rhea" id="RHEA:78435"/>
        <dbReference type="ChEBI" id="CHEBI:52595"/>
        <dbReference type="ChEBI" id="CHEBI:57643"/>
        <dbReference type="ChEBI" id="CHEBI:58168"/>
        <dbReference type="ChEBI" id="CHEBI:76585"/>
    </reaction>
    <physiologicalReaction direction="left-to-right" evidence="4">
        <dbReference type="Rhea" id="RHEA:78436"/>
    </physiologicalReaction>
</comment>
<comment type="catalytic activity">
    <reaction evidence="4">
        <text>1-O-hexadecyl-2-acetyl-sn-glycerol + 1,2-di-(9Z-octadecenoyl)-sn-glycero-3-phosphocholine = 1-O-hexadecyl-2-acetyl-3-(9Z)-octadecenoyl-sn-glycerol + (9Z-octadecenoyl)-sn-glycero-3-phosphocholine</text>
        <dbReference type="Rhea" id="RHEA:38707"/>
        <dbReference type="ChEBI" id="CHEBI:74669"/>
        <dbReference type="ChEBI" id="CHEBI:75936"/>
        <dbReference type="ChEBI" id="CHEBI:76055"/>
        <dbReference type="ChEBI" id="CHEBI:76083"/>
    </reaction>
    <physiologicalReaction direction="left-to-right" evidence="4">
        <dbReference type="Rhea" id="RHEA:38708"/>
    </physiologicalReaction>
</comment>
<comment type="catalytic activity">
    <reaction evidence="4">
        <text>1-O-hexadecyl-2-O-methyl-sn-glycerol + 1,2-di-(9Z-octadecenoyl)-sn-glycero-3-phosphocholine = 1-O-hexadecyl-2-O-methyl-3-(9Z)-octadecenoyl-sn-glycerol + (9Z-octadecenoyl)-sn-glycero-3-phosphocholine</text>
        <dbReference type="Rhea" id="RHEA:38723"/>
        <dbReference type="ChEBI" id="CHEBI:74669"/>
        <dbReference type="ChEBI" id="CHEBI:76063"/>
        <dbReference type="ChEBI" id="CHEBI:76064"/>
        <dbReference type="ChEBI" id="CHEBI:76083"/>
    </reaction>
    <physiologicalReaction direction="left-to-right" evidence="4">
        <dbReference type="Rhea" id="RHEA:38724"/>
    </physiologicalReaction>
</comment>
<comment type="catalytic activity">
    <reaction evidence="7">
        <text>a 1,2-diacyl-sn-glycero-3-phosphoethanolamine + H2O = a 1-acyl-sn-glycero-3-phosphoethanolamine + a fatty acid + H(+)</text>
        <dbReference type="Rhea" id="RHEA:44604"/>
        <dbReference type="ChEBI" id="CHEBI:15377"/>
        <dbReference type="ChEBI" id="CHEBI:15378"/>
        <dbReference type="ChEBI" id="CHEBI:28868"/>
        <dbReference type="ChEBI" id="CHEBI:64381"/>
        <dbReference type="ChEBI" id="CHEBI:64612"/>
    </reaction>
    <physiologicalReaction direction="left-to-right" evidence="11">
        <dbReference type="Rhea" id="RHEA:44605"/>
    </physiologicalReaction>
</comment>
<comment type="catalytic activity">
    <reaction evidence="7">
        <text>1-acyl-2-(5Z,8Z,11Z,14Z)-eicosatetraenoyl-sn-glycero-3-phosphoethanolamine + H2O = a 1-acyl-sn-glycero-3-phosphoethanolamine + (5Z,8Z,11Z,14Z)-eicosatetraenoate + H(+)</text>
        <dbReference type="Rhea" id="RHEA:40647"/>
        <dbReference type="ChEBI" id="CHEBI:15377"/>
        <dbReference type="ChEBI" id="CHEBI:15378"/>
        <dbReference type="ChEBI" id="CHEBI:32395"/>
        <dbReference type="ChEBI" id="CHEBI:64381"/>
        <dbReference type="ChEBI" id="CHEBI:75067"/>
    </reaction>
    <physiologicalReaction direction="left-to-right" evidence="11">
        <dbReference type="Rhea" id="RHEA:40648"/>
    </physiologicalReaction>
</comment>
<comment type="catalytic activity">
    <reaction evidence="3">
        <text>a 1,2-diacyl-sn-glycero-3-phospho-(1'-sn-glycerol) + H2O = 1-acyl-sn-glycero-3-phospho-(1'-sn-glycerol) + a fatty acid + H(+)</text>
        <dbReference type="Rhea" id="RHEA:44416"/>
        <dbReference type="ChEBI" id="CHEBI:15377"/>
        <dbReference type="ChEBI" id="CHEBI:15378"/>
        <dbReference type="ChEBI" id="CHEBI:28868"/>
        <dbReference type="ChEBI" id="CHEBI:64716"/>
        <dbReference type="ChEBI" id="CHEBI:64840"/>
    </reaction>
    <physiologicalReaction direction="left-to-right" evidence="3">
        <dbReference type="Rhea" id="RHEA:44417"/>
    </physiologicalReaction>
</comment>
<comment type="catalytic activity">
    <reaction evidence="3">
        <text>1-hexadecanoyl-2-(9Z-octadecenoyl)-sn-glycero-3-phospho-(1'-sn-glycerol) + H2O = 1-hexadecanoyl-sn-glycero-3-phospho-(1'-sn-glycerol) + (9Z)-octadecenoate + H(+)</text>
        <dbReference type="Rhea" id="RHEA:40919"/>
        <dbReference type="ChEBI" id="CHEBI:15377"/>
        <dbReference type="ChEBI" id="CHEBI:15378"/>
        <dbReference type="ChEBI" id="CHEBI:30823"/>
        <dbReference type="ChEBI" id="CHEBI:72841"/>
        <dbReference type="ChEBI" id="CHEBI:75158"/>
    </reaction>
    <physiologicalReaction direction="left-to-right" evidence="3">
        <dbReference type="Rhea" id="RHEA:40920"/>
    </physiologicalReaction>
</comment>
<comment type="catalytic activity">
    <reaction evidence="3">
        <text>a 1,2-diacyl-sn-glycero-3-phospho-(1'-sn-glycerol) + H2O = 2-acyl-sn-glycero-3-phospho-(1'-sn-glycerol) + a fatty acid + H(+)</text>
        <dbReference type="Rhea" id="RHEA:67428"/>
        <dbReference type="ChEBI" id="CHEBI:15377"/>
        <dbReference type="ChEBI" id="CHEBI:15378"/>
        <dbReference type="ChEBI" id="CHEBI:28868"/>
        <dbReference type="ChEBI" id="CHEBI:64716"/>
        <dbReference type="ChEBI" id="CHEBI:76528"/>
    </reaction>
    <physiologicalReaction direction="left-to-right" evidence="3">
        <dbReference type="Rhea" id="RHEA:67429"/>
    </physiologicalReaction>
</comment>
<comment type="catalytic activity">
    <reaction evidence="3">
        <text>1-hexadecanoyl-2-(9Z-octadecenoyl)-sn-glycero-3-phospho-(1'-sn-glycerol) + H2O = 2-(9Z-octadecenoyl)-sn-glycero-3-phospho-(1'-sn-glycerol) + hexadecanoate + H(+)</text>
        <dbReference type="Rhea" id="RHEA:74103"/>
        <dbReference type="ChEBI" id="CHEBI:7896"/>
        <dbReference type="ChEBI" id="CHEBI:15377"/>
        <dbReference type="ChEBI" id="CHEBI:15378"/>
        <dbReference type="ChEBI" id="CHEBI:72841"/>
        <dbReference type="ChEBI" id="CHEBI:141490"/>
    </reaction>
    <physiologicalReaction direction="left-to-right" evidence="3">
        <dbReference type="Rhea" id="RHEA:74104"/>
    </physiologicalReaction>
</comment>
<comment type="activity regulation">
    <text evidence="7">Transacylase activity is completely inhibited by Triton X-100 and partially inhibited by heparin. Moderately activated by Mg(2+) and Ca(2+).</text>
</comment>
<comment type="biophysicochemical properties">
    <phDependence>
        <text evidence="7">Optimum pH is 4.5 for the transacylase activity.</text>
    </phDependence>
</comment>
<comment type="subcellular location">
    <subcellularLocation>
        <location evidence="2">Lysosome</location>
    </subcellularLocation>
    <subcellularLocation>
        <location evidence="3">Secreted</location>
    </subcellularLocation>
    <subcellularLocation>
        <location evidence="3">Membrane</location>
        <topology evidence="3">Peripheral membrane protein</topology>
    </subcellularLocation>
</comment>
<comment type="tissue specificity">
    <text evidence="7">Detected in brain (at protein level).</text>
</comment>
<comment type="PTM">
    <text evidence="6 7">N-glycosylated.</text>
</comment>
<comment type="PTM">
    <text evidence="3">N-glycosylated. N-glycosylation is important for maturation of the enzyme and normal subcellular location.</text>
</comment>
<comment type="similarity">
    <text evidence="5">Belongs to the AB hydrolase superfamily. Lipase family.</text>
</comment>
<gene>
    <name type="primary">PLA2G15</name>
    <name evidence="12" type="synonym">LYPLA3</name>
</gene>